<evidence type="ECO:0000255" key="1">
    <source>
        <dbReference type="HAMAP-Rule" id="MF_01346"/>
    </source>
</evidence>
<evidence type="ECO:0000305" key="2"/>
<reference key="1">
    <citation type="submission" date="2002-12" db="EMBL/GenBank/DDBJ databases">
        <title>Complete genome sequence of Vibrio vulnificus CMCP6.</title>
        <authorList>
            <person name="Rhee J.H."/>
            <person name="Kim S.Y."/>
            <person name="Chung S.S."/>
            <person name="Kim J.J."/>
            <person name="Moon Y.H."/>
            <person name="Jeong H."/>
            <person name="Choy H.E."/>
        </authorList>
    </citation>
    <scope>NUCLEOTIDE SEQUENCE [LARGE SCALE GENOMIC DNA]</scope>
    <source>
        <strain>CMCP6</strain>
    </source>
</reference>
<feature type="chain" id="PRO_0000238396" description="ATP synthase subunit alpha">
    <location>
        <begin position="1"/>
        <end position="513"/>
    </location>
</feature>
<feature type="binding site" evidence="1">
    <location>
        <begin position="169"/>
        <end position="176"/>
    </location>
    <ligand>
        <name>ATP</name>
        <dbReference type="ChEBI" id="CHEBI:30616"/>
    </ligand>
</feature>
<feature type="site" description="Required for activity" evidence="1">
    <location>
        <position position="373"/>
    </location>
</feature>
<organism>
    <name type="scientific">Vibrio vulnificus (strain CMCP6)</name>
    <dbReference type="NCBI Taxonomy" id="216895"/>
    <lineage>
        <taxon>Bacteria</taxon>
        <taxon>Pseudomonadati</taxon>
        <taxon>Pseudomonadota</taxon>
        <taxon>Gammaproteobacteria</taxon>
        <taxon>Vibrionales</taxon>
        <taxon>Vibrionaceae</taxon>
        <taxon>Vibrio</taxon>
    </lineage>
</organism>
<sequence>MQLNSTEISDLIKQRIESFNVVSEARNEGTIVSVSDGIIRIHGLADVMQGEMIELPGGRYALALNLERDSVGAVVMGPYADLKEGMKVTGTGRILEVPVGPELLGRVVNTLGEPIDGKGPIEAKLTSPVEVIAPGVIDRQSVDQPVQTGYKSVDSMIPIGRGQRELIIGDRQTGKTAMAIDAIINQKNSGIFSIYVAIGQKASTIANVVRKLEEHGALKNTIVVVASASESAALQYLAPYAGCAMGEYFRDRGEDALIVYDDLSKQAVAYRQISLLLKRPPGREAFPGDVFYLHSRLLERAARVNAEYVERFTNGEVKGKTGSLTALPIIETQAGDVSAFVPTNVISITDGQIFLQTELFNAGVRPAVDPGISVSRVGGSAQTKIIKKLSGGIRTALAAYRELAAFAQFSSDLDEATKRQLNHGQKVTELMKQKQYAPMSVFDQALTIFAAERGYLSDIELSKVLDFEAALLSYARGQYAELAAEIDKTGAYNDEIEAQLKKLTDDFKATQTW</sequence>
<name>ATPA_VIBVU</name>
<proteinExistence type="inferred from homology"/>
<keyword id="KW-0066">ATP synthesis</keyword>
<keyword id="KW-0067">ATP-binding</keyword>
<keyword id="KW-0997">Cell inner membrane</keyword>
<keyword id="KW-1003">Cell membrane</keyword>
<keyword id="KW-0139">CF(1)</keyword>
<keyword id="KW-0375">Hydrogen ion transport</keyword>
<keyword id="KW-0406">Ion transport</keyword>
<keyword id="KW-0472">Membrane</keyword>
<keyword id="KW-0547">Nucleotide-binding</keyword>
<keyword id="KW-1278">Translocase</keyword>
<keyword id="KW-0813">Transport</keyword>
<protein>
    <recommendedName>
        <fullName evidence="1">ATP synthase subunit alpha</fullName>
        <ecNumber evidence="1">7.1.2.2</ecNumber>
    </recommendedName>
    <alternativeName>
        <fullName evidence="1">ATP synthase F1 sector subunit alpha</fullName>
    </alternativeName>
    <alternativeName>
        <fullName evidence="1">F-ATPase subunit alpha</fullName>
    </alternativeName>
</protein>
<dbReference type="EC" id="7.1.2.2" evidence="1"/>
<dbReference type="EMBL" id="AE016795">
    <property type="protein sequence ID" value="AAO09507.2"/>
    <property type="status" value="ALT_INIT"/>
    <property type="molecule type" value="Genomic_DNA"/>
</dbReference>
<dbReference type="RefSeq" id="WP_013570873.1">
    <property type="nucleotide sequence ID" value="NC_004459.3"/>
</dbReference>
<dbReference type="SMR" id="Q8DDH0"/>
<dbReference type="GeneID" id="93895308"/>
<dbReference type="KEGG" id="vvu:VV1_1019"/>
<dbReference type="HOGENOM" id="CLU_010091_2_1_6"/>
<dbReference type="Proteomes" id="UP000002275">
    <property type="component" value="Chromosome 1"/>
</dbReference>
<dbReference type="GO" id="GO:0005886">
    <property type="term" value="C:plasma membrane"/>
    <property type="evidence" value="ECO:0007669"/>
    <property type="project" value="UniProtKB-SubCell"/>
</dbReference>
<dbReference type="GO" id="GO:0045259">
    <property type="term" value="C:proton-transporting ATP synthase complex"/>
    <property type="evidence" value="ECO:0007669"/>
    <property type="project" value="UniProtKB-KW"/>
</dbReference>
<dbReference type="GO" id="GO:0043531">
    <property type="term" value="F:ADP binding"/>
    <property type="evidence" value="ECO:0007669"/>
    <property type="project" value="TreeGrafter"/>
</dbReference>
<dbReference type="GO" id="GO:0005524">
    <property type="term" value="F:ATP binding"/>
    <property type="evidence" value="ECO:0007669"/>
    <property type="project" value="UniProtKB-UniRule"/>
</dbReference>
<dbReference type="GO" id="GO:0046933">
    <property type="term" value="F:proton-transporting ATP synthase activity, rotational mechanism"/>
    <property type="evidence" value="ECO:0007669"/>
    <property type="project" value="UniProtKB-UniRule"/>
</dbReference>
<dbReference type="CDD" id="cd18113">
    <property type="entry name" value="ATP-synt_F1_alpha_C"/>
    <property type="match status" value="1"/>
</dbReference>
<dbReference type="CDD" id="cd18116">
    <property type="entry name" value="ATP-synt_F1_alpha_N"/>
    <property type="match status" value="1"/>
</dbReference>
<dbReference type="CDD" id="cd01132">
    <property type="entry name" value="F1-ATPase_alpha_CD"/>
    <property type="match status" value="1"/>
</dbReference>
<dbReference type="FunFam" id="1.20.150.20:FF:000001">
    <property type="entry name" value="ATP synthase subunit alpha"/>
    <property type="match status" value="1"/>
</dbReference>
<dbReference type="FunFam" id="2.40.30.20:FF:000001">
    <property type="entry name" value="ATP synthase subunit alpha"/>
    <property type="match status" value="1"/>
</dbReference>
<dbReference type="FunFam" id="3.40.50.300:FF:000002">
    <property type="entry name" value="ATP synthase subunit alpha"/>
    <property type="match status" value="1"/>
</dbReference>
<dbReference type="Gene3D" id="2.40.30.20">
    <property type="match status" value="1"/>
</dbReference>
<dbReference type="Gene3D" id="1.20.150.20">
    <property type="entry name" value="ATP synthase alpha/beta chain, C-terminal domain"/>
    <property type="match status" value="1"/>
</dbReference>
<dbReference type="Gene3D" id="3.40.50.300">
    <property type="entry name" value="P-loop containing nucleotide triphosphate hydrolases"/>
    <property type="match status" value="1"/>
</dbReference>
<dbReference type="HAMAP" id="MF_01346">
    <property type="entry name" value="ATP_synth_alpha_bact"/>
    <property type="match status" value="1"/>
</dbReference>
<dbReference type="InterPro" id="IPR023366">
    <property type="entry name" value="ATP_synth_asu-like_sf"/>
</dbReference>
<dbReference type="InterPro" id="IPR000793">
    <property type="entry name" value="ATP_synth_asu_C"/>
</dbReference>
<dbReference type="InterPro" id="IPR038376">
    <property type="entry name" value="ATP_synth_asu_C_sf"/>
</dbReference>
<dbReference type="InterPro" id="IPR033732">
    <property type="entry name" value="ATP_synth_F1_a_nt-bd_dom"/>
</dbReference>
<dbReference type="InterPro" id="IPR005294">
    <property type="entry name" value="ATP_synth_F1_asu"/>
</dbReference>
<dbReference type="InterPro" id="IPR020003">
    <property type="entry name" value="ATPase_a/bsu_AS"/>
</dbReference>
<dbReference type="InterPro" id="IPR004100">
    <property type="entry name" value="ATPase_F1/V1/A1_a/bsu_N"/>
</dbReference>
<dbReference type="InterPro" id="IPR036121">
    <property type="entry name" value="ATPase_F1/V1/A1_a/bsu_N_sf"/>
</dbReference>
<dbReference type="InterPro" id="IPR000194">
    <property type="entry name" value="ATPase_F1/V1/A1_a/bsu_nucl-bd"/>
</dbReference>
<dbReference type="InterPro" id="IPR027417">
    <property type="entry name" value="P-loop_NTPase"/>
</dbReference>
<dbReference type="NCBIfam" id="TIGR00962">
    <property type="entry name" value="atpA"/>
    <property type="match status" value="1"/>
</dbReference>
<dbReference type="NCBIfam" id="NF009884">
    <property type="entry name" value="PRK13343.1"/>
    <property type="match status" value="1"/>
</dbReference>
<dbReference type="PANTHER" id="PTHR48082">
    <property type="entry name" value="ATP SYNTHASE SUBUNIT ALPHA, MITOCHONDRIAL"/>
    <property type="match status" value="1"/>
</dbReference>
<dbReference type="PANTHER" id="PTHR48082:SF2">
    <property type="entry name" value="ATP SYNTHASE SUBUNIT ALPHA, MITOCHONDRIAL"/>
    <property type="match status" value="1"/>
</dbReference>
<dbReference type="Pfam" id="PF00006">
    <property type="entry name" value="ATP-synt_ab"/>
    <property type="match status" value="1"/>
</dbReference>
<dbReference type="Pfam" id="PF00306">
    <property type="entry name" value="ATP-synt_ab_C"/>
    <property type="match status" value="1"/>
</dbReference>
<dbReference type="Pfam" id="PF02874">
    <property type="entry name" value="ATP-synt_ab_N"/>
    <property type="match status" value="1"/>
</dbReference>
<dbReference type="SUPFAM" id="SSF47917">
    <property type="entry name" value="C-terminal domain of alpha and beta subunits of F1 ATP synthase"/>
    <property type="match status" value="1"/>
</dbReference>
<dbReference type="SUPFAM" id="SSF50615">
    <property type="entry name" value="N-terminal domain of alpha and beta subunits of F1 ATP synthase"/>
    <property type="match status" value="1"/>
</dbReference>
<dbReference type="SUPFAM" id="SSF52540">
    <property type="entry name" value="P-loop containing nucleoside triphosphate hydrolases"/>
    <property type="match status" value="1"/>
</dbReference>
<dbReference type="PROSITE" id="PS00152">
    <property type="entry name" value="ATPASE_ALPHA_BETA"/>
    <property type="match status" value="1"/>
</dbReference>
<gene>
    <name evidence="1" type="primary">atpA</name>
    <name type="ordered locus">VV1_1019</name>
</gene>
<comment type="function">
    <text evidence="1">Produces ATP from ADP in the presence of a proton gradient across the membrane. The alpha chain is a regulatory subunit.</text>
</comment>
<comment type="catalytic activity">
    <reaction evidence="1">
        <text>ATP + H2O + 4 H(+)(in) = ADP + phosphate + 5 H(+)(out)</text>
        <dbReference type="Rhea" id="RHEA:57720"/>
        <dbReference type="ChEBI" id="CHEBI:15377"/>
        <dbReference type="ChEBI" id="CHEBI:15378"/>
        <dbReference type="ChEBI" id="CHEBI:30616"/>
        <dbReference type="ChEBI" id="CHEBI:43474"/>
        <dbReference type="ChEBI" id="CHEBI:456216"/>
        <dbReference type="EC" id="7.1.2.2"/>
    </reaction>
</comment>
<comment type="subunit">
    <text evidence="1">F-type ATPases have 2 components, CF(1) - the catalytic core - and CF(0) - the membrane proton channel. CF(1) has five subunits: alpha(3), beta(3), gamma(1), delta(1), epsilon(1). CF(0) has three main subunits: a(1), b(2) and c(9-12). The alpha and beta chains form an alternating ring which encloses part of the gamma chain. CF(1) is attached to CF(0) by a central stalk formed by the gamma and epsilon chains, while a peripheral stalk is formed by the delta and b chains.</text>
</comment>
<comment type="subcellular location">
    <subcellularLocation>
        <location evidence="1">Cell inner membrane</location>
        <topology evidence="1">Peripheral membrane protein</topology>
    </subcellularLocation>
</comment>
<comment type="similarity">
    <text evidence="1">Belongs to the ATPase alpha/beta chains family.</text>
</comment>
<comment type="sequence caution" evidence="2">
    <conflict type="erroneous initiation">
        <sequence resource="EMBL-CDS" id="AAO09507"/>
    </conflict>
    <text>Extended N-terminus.</text>
</comment>
<accession>Q8DDH0</accession>